<evidence type="ECO:0000255" key="1">
    <source>
        <dbReference type="HAMAP-Rule" id="MF_00046"/>
    </source>
</evidence>
<comment type="function">
    <text evidence="1">Cell wall formation.</text>
</comment>
<comment type="catalytic activity">
    <reaction evidence="1">
        <text>UDP-N-acetyl-alpha-D-muramate + L-alanine + ATP = UDP-N-acetyl-alpha-D-muramoyl-L-alanine + ADP + phosphate + H(+)</text>
        <dbReference type="Rhea" id="RHEA:23372"/>
        <dbReference type="ChEBI" id="CHEBI:15378"/>
        <dbReference type="ChEBI" id="CHEBI:30616"/>
        <dbReference type="ChEBI" id="CHEBI:43474"/>
        <dbReference type="ChEBI" id="CHEBI:57972"/>
        <dbReference type="ChEBI" id="CHEBI:70757"/>
        <dbReference type="ChEBI" id="CHEBI:83898"/>
        <dbReference type="ChEBI" id="CHEBI:456216"/>
        <dbReference type="EC" id="6.3.2.8"/>
    </reaction>
</comment>
<comment type="pathway">
    <text evidence="1">Cell wall biogenesis; peptidoglycan biosynthesis.</text>
</comment>
<comment type="subcellular location">
    <subcellularLocation>
        <location evidence="1">Cytoplasm</location>
    </subcellularLocation>
</comment>
<comment type="similarity">
    <text evidence="1">Belongs to the MurCDEF family.</text>
</comment>
<dbReference type="EC" id="6.3.2.8" evidence="1"/>
<dbReference type="EMBL" id="FM204884">
    <property type="protein sequence ID" value="CAW98126.1"/>
    <property type="molecule type" value="Genomic_DNA"/>
</dbReference>
<dbReference type="SMR" id="C0MGF5"/>
<dbReference type="KEGG" id="seq:SZO_03150"/>
<dbReference type="eggNOG" id="COG0773">
    <property type="taxonomic scope" value="Bacteria"/>
</dbReference>
<dbReference type="HOGENOM" id="CLU_028104_1_0_9"/>
<dbReference type="UniPathway" id="UPA00219"/>
<dbReference type="Proteomes" id="UP000001368">
    <property type="component" value="Chromosome"/>
</dbReference>
<dbReference type="GO" id="GO:0005737">
    <property type="term" value="C:cytoplasm"/>
    <property type="evidence" value="ECO:0007669"/>
    <property type="project" value="UniProtKB-SubCell"/>
</dbReference>
<dbReference type="GO" id="GO:0005524">
    <property type="term" value="F:ATP binding"/>
    <property type="evidence" value="ECO:0007669"/>
    <property type="project" value="UniProtKB-UniRule"/>
</dbReference>
<dbReference type="GO" id="GO:0008763">
    <property type="term" value="F:UDP-N-acetylmuramate-L-alanine ligase activity"/>
    <property type="evidence" value="ECO:0007669"/>
    <property type="project" value="UniProtKB-UniRule"/>
</dbReference>
<dbReference type="GO" id="GO:0051301">
    <property type="term" value="P:cell division"/>
    <property type="evidence" value="ECO:0007669"/>
    <property type="project" value="UniProtKB-KW"/>
</dbReference>
<dbReference type="GO" id="GO:0071555">
    <property type="term" value="P:cell wall organization"/>
    <property type="evidence" value="ECO:0007669"/>
    <property type="project" value="UniProtKB-KW"/>
</dbReference>
<dbReference type="GO" id="GO:0009252">
    <property type="term" value="P:peptidoglycan biosynthetic process"/>
    <property type="evidence" value="ECO:0007669"/>
    <property type="project" value="UniProtKB-UniRule"/>
</dbReference>
<dbReference type="GO" id="GO:0008360">
    <property type="term" value="P:regulation of cell shape"/>
    <property type="evidence" value="ECO:0007669"/>
    <property type="project" value="UniProtKB-KW"/>
</dbReference>
<dbReference type="Gene3D" id="3.90.190.20">
    <property type="entry name" value="Mur ligase, C-terminal domain"/>
    <property type="match status" value="1"/>
</dbReference>
<dbReference type="Gene3D" id="3.40.1190.10">
    <property type="entry name" value="Mur-like, catalytic domain"/>
    <property type="match status" value="1"/>
</dbReference>
<dbReference type="Gene3D" id="3.40.50.720">
    <property type="entry name" value="NAD(P)-binding Rossmann-like Domain"/>
    <property type="match status" value="1"/>
</dbReference>
<dbReference type="HAMAP" id="MF_00046">
    <property type="entry name" value="MurC"/>
    <property type="match status" value="1"/>
</dbReference>
<dbReference type="InterPro" id="IPR036565">
    <property type="entry name" value="Mur-like_cat_sf"/>
</dbReference>
<dbReference type="InterPro" id="IPR004101">
    <property type="entry name" value="Mur_ligase_C"/>
</dbReference>
<dbReference type="InterPro" id="IPR036615">
    <property type="entry name" value="Mur_ligase_C_dom_sf"/>
</dbReference>
<dbReference type="InterPro" id="IPR013221">
    <property type="entry name" value="Mur_ligase_cen"/>
</dbReference>
<dbReference type="InterPro" id="IPR000713">
    <property type="entry name" value="Mur_ligase_N"/>
</dbReference>
<dbReference type="InterPro" id="IPR050061">
    <property type="entry name" value="MurCDEF_pg_biosynth"/>
</dbReference>
<dbReference type="InterPro" id="IPR005758">
    <property type="entry name" value="UDP-N-AcMur_Ala_ligase_MurC"/>
</dbReference>
<dbReference type="NCBIfam" id="TIGR01082">
    <property type="entry name" value="murC"/>
    <property type="match status" value="1"/>
</dbReference>
<dbReference type="PANTHER" id="PTHR43445:SF3">
    <property type="entry name" value="UDP-N-ACETYLMURAMATE--L-ALANINE LIGASE"/>
    <property type="match status" value="1"/>
</dbReference>
<dbReference type="PANTHER" id="PTHR43445">
    <property type="entry name" value="UDP-N-ACETYLMURAMATE--L-ALANINE LIGASE-RELATED"/>
    <property type="match status" value="1"/>
</dbReference>
<dbReference type="Pfam" id="PF01225">
    <property type="entry name" value="Mur_ligase"/>
    <property type="match status" value="1"/>
</dbReference>
<dbReference type="Pfam" id="PF02875">
    <property type="entry name" value="Mur_ligase_C"/>
    <property type="match status" value="1"/>
</dbReference>
<dbReference type="Pfam" id="PF08245">
    <property type="entry name" value="Mur_ligase_M"/>
    <property type="match status" value="1"/>
</dbReference>
<dbReference type="SUPFAM" id="SSF51984">
    <property type="entry name" value="MurCD N-terminal domain"/>
    <property type="match status" value="1"/>
</dbReference>
<dbReference type="SUPFAM" id="SSF53623">
    <property type="entry name" value="MurD-like peptide ligases, catalytic domain"/>
    <property type="match status" value="1"/>
</dbReference>
<dbReference type="SUPFAM" id="SSF53244">
    <property type="entry name" value="MurD-like peptide ligases, peptide-binding domain"/>
    <property type="match status" value="1"/>
</dbReference>
<keyword id="KW-0067">ATP-binding</keyword>
<keyword id="KW-0131">Cell cycle</keyword>
<keyword id="KW-0132">Cell division</keyword>
<keyword id="KW-0133">Cell shape</keyword>
<keyword id="KW-0961">Cell wall biogenesis/degradation</keyword>
<keyword id="KW-0963">Cytoplasm</keyword>
<keyword id="KW-0436">Ligase</keyword>
<keyword id="KW-0547">Nucleotide-binding</keyword>
<keyword id="KW-0573">Peptidoglycan synthesis</keyword>
<organism>
    <name type="scientific">Streptococcus equi subsp. zooepidemicus (strain H70)</name>
    <dbReference type="NCBI Taxonomy" id="553483"/>
    <lineage>
        <taxon>Bacteria</taxon>
        <taxon>Bacillati</taxon>
        <taxon>Bacillota</taxon>
        <taxon>Bacilli</taxon>
        <taxon>Lactobacillales</taxon>
        <taxon>Streptococcaceae</taxon>
        <taxon>Streptococcus</taxon>
    </lineage>
</organism>
<protein>
    <recommendedName>
        <fullName evidence="1">UDP-N-acetylmuramate--L-alanine ligase</fullName>
        <ecNumber evidence="1">6.3.2.8</ecNumber>
    </recommendedName>
    <alternativeName>
        <fullName evidence="1">UDP-N-acetylmuramoyl-L-alanine synthetase</fullName>
    </alternativeName>
</protein>
<accession>C0MGF5</accession>
<name>MURC_STRS7</name>
<sequence>MSKTYHFIGIKGAGMSALALLLHQMGHKVQGSDVEKYYFTQRGLEQAGITILPFSEDNISPDMELIAGNAFREDNNSEVAYAMRHQLPFKRYHEFLGEFMKQFTSLGVAGAHGKTSTTGLLSHVLKHMAATSYLIGDGTGHGAADARYFVFESDEYERHFMPYHPEYSIITNIDFDHPDYFTGLDDVFNAFNDYAKQVKKALFVYGEDEELRKISSPAPIYYYGFEDTDDFVAFDITRTTNGSDFKVRHHHKLIGQFHLPAYGRHNILNATAVIANLFIAGFDMKLVAEHLKSFSGVKRRFTEKVINDTIIIDDFAHHPTEIIATLDAARQKYPNKEIIAIFQPHTFTRTIALLDDFAHALNEADSVYLAPIYGSAREIDKGDVKVEDLAAKVERPAKVISVDNVSPLLDHDNAVYVFMGAGDIQLYERSFEELLANLTKNNQ</sequence>
<reference key="1">
    <citation type="journal article" date="2009" name="PLoS Pathog.">
        <title>Genomic evidence for the evolution of Streptococcus equi: host restriction, increased virulence, and genetic exchange with human pathogens.</title>
        <authorList>
            <person name="Holden M.T.G."/>
            <person name="Heather Z."/>
            <person name="Paillot R."/>
            <person name="Steward K.F."/>
            <person name="Webb K."/>
            <person name="Ainslie F."/>
            <person name="Jourdan T."/>
            <person name="Bason N.C."/>
            <person name="Holroyd N.E."/>
            <person name="Mungall K."/>
            <person name="Quail M.A."/>
            <person name="Sanders M."/>
            <person name="Simmonds M."/>
            <person name="Willey D."/>
            <person name="Brooks K."/>
            <person name="Aanensen D.M."/>
            <person name="Spratt B.G."/>
            <person name="Jolley K.A."/>
            <person name="Maiden M.C.J."/>
            <person name="Kehoe M."/>
            <person name="Chanter N."/>
            <person name="Bentley S.D."/>
            <person name="Robinson C."/>
            <person name="Maskell D.J."/>
            <person name="Parkhill J."/>
            <person name="Waller A.S."/>
        </authorList>
    </citation>
    <scope>NUCLEOTIDE SEQUENCE [LARGE SCALE GENOMIC DNA]</scope>
    <source>
        <strain>H70</strain>
    </source>
</reference>
<proteinExistence type="inferred from homology"/>
<feature type="chain" id="PRO_1000202190" description="UDP-N-acetylmuramate--L-alanine ligase">
    <location>
        <begin position="1"/>
        <end position="443"/>
    </location>
</feature>
<feature type="binding site" evidence="1">
    <location>
        <begin position="110"/>
        <end position="116"/>
    </location>
    <ligand>
        <name>ATP</name>
        <dbReference type="ChEBI" id="CHEBI:30616"/>
    </ligand>
</feature>
<gene>
    <name evidence="1" type="primary">murC</name>
    <name type="ordered locus">SZO_03150</name>
</gene>